<keyword id="KW-0143">Chaperone</keyword>
<keyword id="KW-0963">Cytoplasm</keyword>
<keyword id="KW-1185">Reference proteome</keyword>
<protein>
    <recommendedName>
        <fullName evidence="1">Prefoldin subunit alpha</fullName>
    </recommendedName>
    <alternativeName>
        <fullName evidence="1">GimC subunit alpha</fullName>
    </alternativeName>
</protein>
<name>PFDA_NITMS</name>
<dbReference type="EMBL" id="CP000866">
    <property type="protein sequence ID" value="ABX12291.1"/>
    <property type="molecule type" value="Genomic_DNA"/>
</dbReference>
<dbReference type="RefSeq" id="WP_012214778.1">
    <property type="nucleotide sequence ID" value="NC_010085.1"/>
</dbReference>
<dbReference type="SMR" id="A9A592"/>
<dbReference type="STRING" id="436308.Nmar_0395"/>
<dbReference type="EnsemblBacteria" id="ABX12291">
    <property type="protein sequence ID" value="ABX12291"/>
    <property type="gene ID" value="Nmar_0395"/>
</dbReference>
<dbReference type="GeneID" id="5773877"/>
<dbReference type="KEGG" id="nmr:Nmar_0395"/>
<dbReference type="eggNOG" id="arCOG01341">
    <property type="taxonomic scope" value="Archaea"/>
</dbReference>
<dbReference type="HOGENOM" id="CLU_091867_1_0_2"/>
<dbReference type="InParanoid" id="A9A592"/>
<dbReference type="OrthoDB" id="10045at2157"/>
<dbReference type="Proteomes" id="UP000000792">
    <property type="component" value="Chromosome"/>
</dbReference>
<dbReference type="GO" id="GO:0005737">
    <property type="term" value="C:cytoplasm"/>
    <property type="evidence" value="ECO:0000318"/>
    <property type="project" value="GO_Central"/>
</dbReference>
<dbReference type="GO" id="GO:0016272">
    <property type="term" value="C:prefoldin complex"/>
    <property type="evidence" value="ECO:0000318"/>
    <property type="project" value="GO_Central"/>
</dbReference>
<dbReference type="GO" id="GO:0051082">
    <property type="term" value="F:unfolded protein binding"/>
    <property type="evidence" value="ECO:0007669"/>
    <property type="project" value="UniProtKB-UniRule"/>
</dbReference>
<dbReference type="GO" id="GO:0006457">
    <property type="term" value="P:protein folding"/>
    <property type="evidence" value="ECO:0007669"/>
    <property type="project" value="UniProtKB-UniRule"/>
</dbReference>
<dbReference type="CDD" id="cd23160">
    <property type="entry name" value="Prefoldin_alpha_GimC"/>
    <property type="match status" value="1"/>
</dbReference>
<dbReference type="FunFam" id="1.10.287.370:FF:000027">
    <property type="entry name" value="Prefoldin subunit alpha 1"/>
    <property type="match status" value="1"/>
</dbReference>
<dbReference type="Gene3D" id="1.10.287.370">
    <property type="match status" value="1"/>
</dbReference>
<dbReference type="HAMAP" id="MF_00308">
    <property type="entry name" value="PfdA"/>
    <property type="match status" value="1"/>
</dbReference>
<dbReference type="InterPro" id="IPR011599">
    <property type="entry name" value="PFD_alpha_archaea"/>
</dbReference>
<dbReference type="InterPro" id="IPR009053">
    <property type="entry name" value="Prefoldin"/>
</dbReference>
<dbReference type="InterPro" id="IPR004127">
    <property type="entry name" value="Prefoldin_subunit_alpha"/>
</dbReference>
<dbReference type="NCBIfam" id="TIGR00293">
    <property type="entry name" value="prefoldin subunit alpha"/>
    <property type="match status" value="1"/>
</dbReference>
<dbReference type="PANTHER" id="PTHR12674">
    <property type="entry name" value="PREFOLDIN SUBUNIT 5"/>
    <property type="match status" value="1"/>
</dbReference>
<dbReference type="PANTHER" id="PTHR12674:SF2">
    <property type="entry name" value="PREFOLDIN SUBUNIT 5"/>
    <property type="match status" value="1"/>
</dbReference>
<dbReference type="Pfam" id="PF02996">
    <property type="entry name" value="Prefoldin"/>
    <property type="match status" value="1"/>
</dbReference>
<dbReference type="SUPFAM" id="SSF46579">
    <property type="entry name" value="Prefoldin"/>
    <property type="match status" value="1"/>
</dbReference>
<reference key="1">
    <citation type="journal article" date="2010" name="Proc. Natl. Acad. Sci. U.S.A.">
        <title>Nitrosopumilus maritimus genome reveals unique mechanisms for nitrification and autotrophy in globally distributed marine crenarchaea.</title>
        <authorList>
            <person name="Walker C.B."/>
            <person name="de la Torre J.R."/>
            <person name="Klotz M.G."/>
            <person name="Urakawa H."/>
            <person name="Pinel N."/>
            <person name="Arp D.J."/>
            <person name="Brochier-Armanet C."/>
            <person name="Chain P.S."/>
            <person name="Chan P.P."/>
            <person name="Gollabgir A."/>
            <person name="Hemp J."/>
            <person name="Hugler M."/>
            <person name="Karr E.A."/>
            <person name="Konneke M."/>
            <person name="Shin M."/>
            <person name="Lawton T.J."/>
            <person name="Lowe T."/>
            <person name="Martens-Habbena W."/>
            <person name="Sayavedra-Soto L.A."/>
            <person name="Lang D."/>
            <person name="Sievert S.M."/>
            <person name="Rosenzweig A.C."/>
            <person name="Manning G."/>
            <person name="Stahl D.A."/>
        </authorList>
    </citation>
    <scope>NUCLEOTIDE SEQUENCE [LARGE SCALE GENOMIC DNA]</scope>
    <source>
        <strain>SCM1</strain>
    </source>
</reference>
<sequence length="145" mass="15963">MSQEQAEQLMQQMQMLETYFADLSQRENTFLGVFREATAAIESIKSLSKNPESDTLVPIGLGTYVPTKISSDSKIILNIGAGVAVEKDFPSAINYLEERIKEIEIAIQDTAAKKQDAAQRLEQGKAQVNQLMQAMQQSGQPPKSG</sequence>
<organism>
    <name type="scientific">Nitrosopumilus maritimus (strain SCM1)</name>
    <dbReference type="NCBI Taxonomy" id="436308"/>
    <lineage>
        <taxon>Archaea</taxon>
        <taxon>Nitrososphaerota</taxon>
        <taxon>Nitrososphaeria</taxon>
        <taxon>Nitrosopumilales</taxon>
        <taxon>Nitrosopumilaceae</taxon>
        <taxon>Nitrosopumilus</taxon>
    </lineage>
</organism>
<gene>
    <name evidence="1" type="primary">pfdA</name>
    <name type="ordered locus">Nmar_0395</name>
</gene>
<comment type="function">
    <text evidence="1">Molecular chaperone capable of stabilizing a range of proteins. Seems to fulfill an ATP-independent, HSP70-like function in archaeal de novo protein folding.</text>
</comment>
<comment type="subunit">
    <text evidence="1">Heterohexamer of two alpha and four beta subunits.</text>
</comment>
<comment type="subcellular location">
    <subcellularLocation>
        <location evidence="1">Cytoplasm</location>
    </subcellularLocation>
</comment>
<comment type="similarity">
    <text evidence="1">Belongs to the prefoldin alpha subunit family.</text>
</comment>
<accession>A9A592</accession>
<feature type="chain" id="PRO_1000115628" description="Prefoldin subunit alpha">
    <location>
        <begin position="1"/>
        <end position="145"/>
    </location>
</feature>
<proteinExistence type="inferred from homology"/>
<evidence type="ECO:0000255" key="1">
    <source>
        <dbReference type="HAMAP-Rule" id="MF_00308"/>
    </source>
</evidence>